<sequence>MIYKVFYQETKERNPRREQTKTLYVTIDAANELEGRIAARKLVEENTAYNIEFIELLSDKHLEYEKETGVFELTEF</sequence>
<keyword id="KW-0240">DNA-directed RNA polymerase</keyword>
<keyword id="KW-0548">Nucleotidyltransferase</keyword>
<keyword id="KW-0804">Transcription</keyword>
<keyword id="KW-0808">Transferase</keyword>
<name>RPOY_STRA1</name>
<organism>
    <name type="scientific">Streptococcus agalactiae serotype Ia (strain ATCC 27591 / A909 / CDC SS700)</name>
    <dbReference type="NCBI Taxonomy" id="205921"/>
    <lineage>
        <taxon>Bacteria</taxon>
        <taxon>Bacillati</taxon>
        <taxon>Bacillota</taxon>
        <taxon>Bacilli</taxon>
        <taxon>Lactobacillales</taxon>
        <taxon>Streptococcaceae</taxon>
        <taxon>Streptococcus</taxon>
    </lineage>
</organism>
<feature type="chain" id="PRO_0000163143" description="DNA-directed RNA polymerase subunit epsilon">
    <location>
        <begin position="1"/>
        <end position="76"/>
    </location>
</feature>
<protein>
    <recommendedName>
        <fullName evidence="1">DNA-directed RNA polymerase subunit epsilon</fullName>
        <shortName evidence="1">RNAP epsilon subunit</shortName>
        <ecNumber evidence="1">2.7.7.6</ecNumber>
    </recommendedName>
    <alternativeName>
        <fullName evidence="1">RNA polymerase epsilon subunit</fullName>
    </alternativeName>
    <alternativeName>
        <fullName evidence="1">Transcriptase subunit epsilon</fullName>
    </alternativeName>
</protein>
<dbReference type="EC" id="2.7.7.6" evidence="1"/>
<dbReference type="EMBL" id="CP000114">
    <property type="protein sequence ID" value="ABA46105.1"/>
    <property type="molecule type" value="Genomic_DNA"/>
</dbReference>
<dbReference type="RefSeq" id="WP_000639570.1">
    <property type="nucleotide sequence ID" value="NC_007432.1"/>
</dbReference>
<dbReference type="SMR" id="Q3JZC4"/>
<dbReference type="KEGG" id="sak:SAK_1782"/>
<dbReference type="HOGENOM" id="CLU_187518_0_0_9"/>
<dbReference type="GO" id="GO:0000428">
    <property type="term" value="C:DNA-directed RNA polymerase complex"/>
    <property type="evidence" value="ECO:0007669"/>
    <property type="project" value="UniProtKB-KW"/>
</dbReference>
<dbReference type="GO" id="GO:0003677">
    <property type="term" value="F:DNA binding"/>
    <property type="evidence" value="ECO:0007669"/>
    <property type="project" value="UniProtKB-UniRule"/>
</dbReference>
<dbReference type="GO" id="GO:0003899">
    <property type="term" value="F:DNA-directed RNA polymerase activity"/>
    <property type="evidence" value="ECO:0007669"/>
    <property type="project" value="UniProtKB-UniRule"/>
</dbReference>
<dbReference type="GO" id="GO:0006351">
    <property type="term" value="P:DNA-templated transcription"/>
    <property type="evidence" value="ECO:0007669"/>
    <property type="project" value="UniProtKB-UniRule"/>
</dbReference>
<dbReference type="Gene3D" id="3.10.20.730">
    <property type="entry name" value="RNAP, epsilon subunit-like"/>
    <property type="match status" value="1"/>
</dbReference>
<dbReference type="HAMAP" id="MF_01553">
    <property type="entry name" value="RNApol_bact_RpoY"/>
    <property type="match status" value="1"/>
</dbReference>
<dbReference type="InterPro" id="IPR009907">
    <property type="entry name" value="RpoY"/>
</dbReference>
<dbReference type="NCBIfam" id="NF010188">
    <property type="entry name" value="PRK13667.1"/>
    <property type="match status" value="1"/>
</dbReference>
<dbReference type="Pfam" id="PF07288">
    <property type="entry name" value="RpoY"/>
    <property type="match status" value="1"/>
</dbReference>
<evidence type="ECO:0000255" key="1">
    <source>
        <dbReference type="HAMAP-Rule" id="MF_01553"/>
    </source>
</evidence>
<accession>Q3JZC4</accession>
<proteinExistence type="inferred from homology"/>
<gene>
    <name evidence="1" type="primary">rpoY</name>
    <name type="ordered locus">SAK_1782</name>
</gene>
<reference key="1">
    <citation type="journal article" date="2005" name="Proc. Natl. Acad. Sci. U.S.A.">
        <title>Genome analysis of multiple pathogenic isolates of Streptococcus agalactiae: implications for the microbial 'pan-genome'.</title>
        <authorList>
            <person name="Tettelin H."/>
            <person name="Masignani V."/>
            <person name="Cieslewicz M.J."/>
            <person name="Donati C."/>
            <person name="Medini D."/>
            <person name="Ward N.L."/>
            <person name="Angiuoli S.V."/>
            <person name="Crabtree J."/>
            <person name="Jones A.L."/>
            <person name="Durkin A.S."/>
            <person name="DeBoy R.T."/>
            <person name="Davidsen T.M."/>
            <person name="Mora M."/>
            <person name="Scarselli M."/>
            <person name="Margarit y Ros I."/>
            <person name="Peterson J.D."/>
            <person name="Hauser C.R."/>
            <person name="Sundaram J.P."/>
            <person name="Nelson W.C."/>
            <person name="Madupu R."/>
            <person name="Brinkac L.M."/>
            <person name="Dodson R.J."/>
            <person name="Rosovitz M.J."/>
            <person name="Sullivan S.A."/>
            <person name="Daugherty S.C."/>
            <person name="Haft D.H."/>
            <person name="Selengut J."/>
            <person name="Gwinn M.L."/>
            <person name="Zhou L."/>
            <person name="Zafar N."/>
            <person name="Khouri H."/>
            <person name="Radune D."/>
            <person name="Dimitrov G."/>
            <person name="Watkins K."/>
            <person name="O'Connor K.J."/>
            <person name="Smith S."/>
            <person name="Utterback T.R."/>
            <person name="White O."/>
            <person name="Rubens C.E."/>
            <person name="Grandi G."/>
            <person name="Madoff L.C."/>
            <person name="Kasper D.L."/>
            <person name="Telford J.L."/>
            <person name="Wessels M.R."/>
            <person name="Rappuoli R."/>
            <person name="Fraser C.M."/>
        </authorList>
    </citation>
    <scope>NUCLEOTIDE SEQUENCE [LARGE SCALE GENOMIC DNA]</scope>
    <source>
        <strain>ATCC 27591 / A909 / CDC SS700</strain>
    </source>
</reference>
<comment type="function">
    <text evidence="1">A non-essential component of RNA polymerase (RNAP).</text>
</comment>
<comment type="catalytic activity">
    <reaction evidence="1">
        <text>RNA(n) + a ribonucleoside 5'-triphosphate = RNA(n+1) + diphosphate</text>
        <dbReference type="Rhea" id="RHEA:21248"/>
        <dbReference type="Rhea" id="RHEA-COMP:14527"/>
        <dbReference type="Rhea" id="RHEA-COMP:17342"/>
        <dbReference type="ChEBI" id="CHEBI:33019"/>
        <dbReference type="ChEBI" id="CHEBI:61557"/>
        <dbReference type="ChEBI" id="CHEBI:140395"/>
        <dbReference type="EC" id="2.7.7.6"/>
    </reaction>
</comment>
<comment type="subunit">
    <text evidence="1">RNAP is composed of a core of 2 alpha, a beta and a beta' subunit. The core is associated with a delta subunit, and at least one of epsilon or omega. When a sigma factor is associated with the core the holoenzyme is formed, which can initiate transcription.</text>
</comment>
<comment type="similarity">
    <text evidence="1">Belongs to the RNA polymerase subunit epsilon family.</text>
</comment>